<reference key="1">
    <citation type="journal article" date="2008" name="J. Bacteriol.">
        <title>Complete genome sequence of the soil actinomycete Kocuria rhizophila.</title>
        <authorList>
            <person name="Takarada H."/>
            <person name="Sekine M."/>
            <person name="Kosugi H."/>
            <person name="Matsuo Y."/>
            <person name="Fujisawa T."/>
            <person name="Omata S."/>
            <person name="Kishi E."/>
            <person name="Shimizu A."/>
            <person name="Tsukatani N."/>
            <person name="Tanikawa S."/>
            <person name="Fujita N."/>
            <person name="Harayama S."/>
        </authorList>
    </citation>
    <scope>NUCLEOTIDE SEQUENCE [LARGE SCALE GENOMIC DNA]</scope>
    <source>
        <strain>ATCC 9341 / DSM 348 / NBRC 103217 / DC2201</strain>
    </source>
</reference>
<protein>
    <recommendedName>
        <fullName evidence="1">6,7-dimethyl-8-ribityllumazine synthase</fullName>
        <shortName evidence="1">DMRL synthase</shortName>
        <shortName evidence="1">LS</shortName>
        <shortName evidence="1">Lumazine synthase</shortName>
        <ecNumber evidence="1">2.5.1.78</ecNumber>
    </recommendedName>
</protein>
<feature type="chain" id="PRO_1000098201" description="6,7-dimethyl-8-ribityllumazine synthase">
    <location>
        <begin position="1"/>
        <end position="156"/>
    </location>
</feature>
<feature type="active site" description="Proton donor" evidence="1">
    <location>
        <position position="90"/>
    </location>
</feature>
<feature type="binding site" evidence="1">
    <location>
        <position position="28"/>
    </location>
    <ligand>
        <name>5-amino-6-(D-ribitylamino)uracil</name>
        <dbReference type="ChEBI" id="CHEBI:15934"/>
    </ligand>
</feature>
<feature type="binding site" evidence="1">
    <location>
        <begin position="60"/>
        <end position="62"/>
    </location>
    <ligand>
        <name>5-amino-6-(D-ribitylamino)uracil</name>
        <dbReference type="ChEBI" id="CHEBI:15934"/>
    </ligand>
</feature>
<feature type="binding site" evidence="1">
    <location>
        <begin position="82"/>
        <end position="84"/>
    </location>
    <ligand>
        <name>5-amino-6-(D-ribitylamino)uracil</name>
        <dbReference type="ChEBI" id="CHEBI:15934"/>
    </ligand>
</feature>
<feature type="binding site" evidence="1">
    <location>
        <begin position="87"/>
        <end position="88"/>
    </location>
    <ligand>
        <name>(2S)-2-hydroxy-3-oxobutyl phosphate</name>
        <dbReference type="ChEBI" id="CHEBI:58830"/>
    </ligand>
</feature>
<feature type="binding site" evidence="1">
    <location>
        <position position="115"/>
    </location>
    <ligand>
        <name>5-amino-6-(D-ribitylamino)uracil</name>
        <dbReference type="ChEBI" id="CHEBI:15934"/>
    </ligand>
</feature>
<feature type="binding site" evidence="1">
    <location>
        <position position="129"/>
    </location>
    <ligand>
        <name>(2S)-2-hydroxy-3-oxobutyl phosphate</name>
        <dbReference type="ChEBI" id="CHEBI:58830"/>
    </ligand>
</feature>
<proteinExistence type="inferred from homology"/>
<comment type="function">
    <text evidence="1">Catalyzes the formation of 6,7-dimethyl-8-ribityllumazine by condensation of 5-amino-6-(D-ribitylamino)uracil with 3,4-dihydroxy-2-butanone 4-phosphate. This is the penultimate step in the biosynthesis of riboflavin.</text>
</comment>
<comment type="catalytic activity">
    <reaction evidence="1">
        <text>(2S)-2-hydroxy-3-oxobutyl phosphate + 5-amino-6-(D-ribitylamino)uracil = 6,7-dimethyl-8-(1-D-ribityl)lumazine + phosphate + 2 H2O + H(+)</text>
        <dbReference type="Rhea" id="RHEA:26152"/>
        <dbReference type="ChEBI" id="CHEBI:15377"/>
        <dbReference type="ChEBI" id="CHEBI:15378"/>
        <dbReference type="ChEBI" id="CHEBI:15934"/>
        <dbReference type="ChEBI" id="CHEBI:43474"/>
        <dbReference type="ChEBI" id="CHEBI:58201"/>
        <dbReference type="ChEBI" id="CHEBI:58830"/>
        <dbReference type="EC" id="2.5.1.78"/>
    </reaction>
</comment>
<comment type="pathway">
    <text evidence="1">Cofactor biosynthesis; riboflavin biosynthesis; riboflavin from 2-hydroxy-3-oxobutyl phosphate and 5-amino-6-(D-ribitylamino)uracil: step 1/2.</text>
</comment>
<comment type="similarity">
    <text evidence="1">Belongs to the DMRL synthase family.</text>
</comment>
<dbReference type="EC" id="2.5.1.78" evidence="1"/>
<dbReference type="EMBL" id="AP009152">
    <property type="protein sequence ID" value="BAG29519.1"/>
    <property type="molecule type" value="Genomic_DNA"/>
</dbReference>
<dbReference type="RefSeq" id="WP_012398240.1">
    <property type="nucleotide sequence ID" value="NC_010617.1"/>
</dbReference>
<dbReference type="SMR" id="B2GGU6"/>
<dbReference type="STRING" id="378753.KRH_11720"/>
<dbReference type="KEGG" id="krh:KRH_11720"/>
<dbReference type="eggNOG" id="COG0054">
    <property type="taxonomic scope" value="Bacteria"/>
</dbReference>
<dbReference type="HOGENOM" id="CLU_089358_1_1_11"/>
<dbReference type="OrthoDB" id="9809709at2"/>
<dbReference type="UniPathway" id="UPA00275">
    <property type="reaction ID" value="UER00404"/>
</dbReference>
<dbReference type="Proteomes" id="UP000008838">
    <property type="component" value="Chromosome"/>
</dbReference>
<dbReference type="GO" id="GO:0005829">
    <property type="term" value="C:cytosol"/>
    <property type="evidence" value="ECO:0007669"/>
    <property type="project" value="TreeGrafter"/>
</dbReference>
<dbReference type="GO" id="GO:0009349">
    <property type="term" value="C:riboflavin synthase complex"/>
    <property type="evidence" value="ECO:0007669"/>
    <property type="project" value="InterPro"/>
</dbReference>
<dbReference type="GO" id="GO:0000906">
    <property type="term" value="F:6,7-dimethyl-8-ribityllumazine synthase activity"/>
    <property type="evidence" value="ECO:0007669"/>
    <property type="project" value="UniProtKB-UniRule"/>
</dbReference>
<dbReference type="GO" id="GO:0009231">
    <property type="term" value="P:riboflavin biosynthetic process"/>
    <property type="evidence" value="ECO:0007669"/>
    <property type="project" value="UniProtKB-UniRule"/>
</dbReference>
<dbReference type="CDD" id="cd09209">
    <property type="entry name" value="Lumazine_synthase-I"/>
    <property type="match status" value="1"/>
</dbReference>
<dbReference type="Gene3D" id="3.40.50.960">
    <property type="entry name" value="Lumazine/riboflavin synthase"/>
    <property type="match status" value="1"/>
</dbReference>
<dbReference type="HAMAP" id="MF_00178">
    <property type="entry name" value="Lumazine_synth"/>
    <property type="match status" value="1"/>
</dbReference>
<dbReference type="InterPro" id="IPR034964">
    <property type="entry name" value="LS"/>
</dbReference>
<dbReference type="InterPro" id="IPR002180">
    <property type="entry name" value="LS/RS"/>
</dbReference>
<dbReference type="InterPro" id="IPR036467">
    <property type="entry name" value="LS/RS_sf"/>
</dbReference>
<dbReference type="NCBIfam" id="TIGR00114">
    <property type="entry name" value="lumazine-synth"/>
    <property type="match status" value="1"/>
</dbReference>
<dbReference type="PANTHER" id="PTHR21058:SF0">
    <property type="entry name" value="6,7-DIMETHYL-8-RIBITYLLUMAZINE SYNTHASE"/>
    <property type="match status" value="1"/>
</dbReference>
<dbReference type="PANTHER" id="PTHR21058">
    <property type="entry name" value="6,7-DIMETHYL-8-RIBITYLLUMAZINE SYNTHASE DMRL SYNTHASE LUMAZINE SYNTHASE"/>
    <property type="match status" value="1"/>
</dbReference>
<dbReference type="Pfam" id="PF00885">
    <property type="entry name" value="DMRL_synthase"/>
    <property type="match status" value="1"/>
</dbReference>
<dbReference type="SUPFAM" id="SSF52121">
    <property type="entry name" value="Lumazine synthase"/>
    <property type="match status" value="1"/>
</dbReference>
<evidence type="ECO:0000255" key="1">
    <source>
        <dbReference type="HAMAP-Rule" id="MF_00178"/>
    </source>
</evidence>
<keyword id="KW-1185">Reference proteome</keyword>
<keyword id="KW-0686">Riboflavin biosynthesis</keyword>
<keyword id="KW-0808">Transferase</keyword>
<accession>B2GGU6</accession>
<organism>
    <name type="scientific">Kocuria rhizophila (strain ATCC 9341 / DSM 348 / NBRC 103217 / DC2201)</name>
    <dbReference type="NCBI Taxonomy" id="378753"/>
    <lineage>
        <taxon>Bacteria</taxon>
        <taxon>Bacillati</taxon>
        <taxon>Actinomycetota</taxon>
        <taxon>Actinomycetes</taxon>
        <taxon>Micrococcales</taxon>
        <taxon>Micrococcaceae</taxon>
        <taxon>Kocuria</taxon>
    </lineage>
</organism>
<sequence length="156" mass="15909">MSGHGAPTTDATTLDASTLRVAVVAASWHTTIMDGLLDGARRALADARAGHVVQVRVPGSFELPVAASRLAGDVDAVVALGVVVRGGTPHFDYVCHAATSGLTEVSVRTGTPVGFGLLTCDTEEQGLDRAGLEGSHEDKGYEAAHAALSTALTLGY</sequence>
<gene>
    <name evidence="1" type="primary">ribH</name>
    <name type="ordered locus">KRH_11720</name>
</gene>
<name>RISB_KOCRD</name>